<accession>Q8XLM2</accession>
<proteinExistence type="inferred from homology"/>
<sequence>MIDKEKIKEGMKLILEAIGEDVNREGLIETPDRIARMYEEIFSGIGMNAKEHLSKTFEVHSNDLVLEKDITFYSMCEHHLVPFYGKVHIAYIPNGRVVGLSKLARCVEVYSKKPQLQERLTKEIADSIMEYLDAQGVMVVVEGEHMCMTMRGVRKPGAKTVTTTYRGKFLEDESLKNDVFRMISM</sequence>
<protein>
    <recommendedName>
        <fullName evidence="2">GTP cyclohydrolase 1</fullName>
        <ecNumber evidence="2">3.5.4.16</ecNumber>
    </recommendedName>
    <alternativeName>
        <fullName evidence="2">GTP cyclohydrolase I</fullName>
        <shortName evidence="2">GTP-CH-I</shortName>
    </alternativeName>
</protein>
<gene>
    <name evidence="2" type="primary">folE</name>
    <name type="synonym">mtrA</name>
    <name type="ordered locus">CPE1019</name>
</gene>
<dbReference type="EC" id="3.5.4.16" evidence="2"/>
<dbReference type="EMBL" id="BA000016">
    <property type="protein sequence ID" value="BAB80725.1"/>
    <property type="molecule type" value="Genomic_DNA"/>
</dbReference>
<dbReference type="RefSeq" id="WP_011010177.1">
    <property type="nucleotide sequence ID" value="NC_003366.1"/>
</dbReference>
<dbReference type="SMR" id="Q8XLM2"/>
<dbReference type="STRING" id="195102.gene:10490282"/>
<dbReference type="KEGG" id="cpe:CPE1019"/>
<dbReference type="HOGENOM" id="CLU_049768_3_3_9"/>
<dbReference type="UniPathway" id="UPA00848">
    <property type="reaction ID" value="UER00151"/>
</dbReference>
<dbReference type="Proteomes" id="UP000000818">
    <property type="component" value="Chromosome"/>
</dbReference>
<dbReference type="GO" id="GO:0005737">
    <property type="term" value="C:cytoplasm"/>
    <property type="evidence" value="ECO:0007669"/>
    <property type="project" value="TreeGrafter"/>
</dbReference>
<dbReference type="GO" id="GO:0005525">
    <property type="term" value="F:GTP binding"/>
    <property type="evidence" value="ECO:0007669"/>
    <property type="project" value="UniProtKB-KW"/>
</dbReference>
<dbReference type="GO" id="GO:0003934">
    <property type="term" value="F:GTP cyclohydrolase I activity"/>
    <property type="evidence" value="ECO:0007669"/>
    <property type="project" value="UniProtKB-UniRule"/>
</dbReference>
<dbReference type="GO" id="GO:0008270">
    <property type="term" value="F:zinc ion binding"/>
    <property type="evidence" value="ECO:0007669"/>
    <property type="project" value="UniProtKB-UniRule"/>
</dbReference>
<dbReference type="GO" id="GO:0006730">
    <property type="term" value="P:one-carbon metabolic process"/>
    <property type="evidence" value="ECO:0007669"/>
    <property type="project" value="UniProtKB-UniRule"/>
</dbReference>
<dbReference type="GO" id="GO:0006729">
    <property type="term" value="P:tetrahydrobiopterin biosynthetic process"/>
    <property type="evidence" value="ECO:0007669"/>
    <property type="project" value="TreeGrafter"/>
</dbReference>
<dbReference type="GO" id="GO:0046654">
    <property type="term" value="P:tetrahydrofolate biosynthetic process"/>
    <property type="evidence" value="ECO:0007669"/>
    <property type="project" value="UniProtKB-UniRule"/>
</dbReference>
<dbReference type="FunFam" id="1.10.286.10:FF:000001">
    <property type="entry name" value="GTP cyclohydrolase 1"/>
    <property type="match status" value="1"/>
</dbReference>
<dbReference type="FunFam" id="3.30.1130.10:FF:000001">
    <property type="entry name" value="GTP cyclohydrolase 1"/>
    <property type="match status" value="1"/>
</dbReference>
<dbReference type="Gene3D" id="1.10.286.10">
    <property type="match status" value="1"/>
</dbReference>
<dbReference type="Gene3D" id="3.30.1130.10">
    <property type="match status" value="1"/>
</dbReference>
<dbReference type="HAMAP" id="MF_00223">
    <property type="entry name" value="FolE"/>
    <property type="match status" value="1"/>
</dbReference>
<dbReference type="InterPro" id="IPR043133">
    <property type="entry name" value="GTP-CH-I_C/QueF"/>
</dbReference>
<dbReference type="InterPro" id="IPR043134">
    <property type="entry name" value="GTP-CH-I_N"/>
</dbReference>
<dbReference type="InterPro" id="IPR001474">
    <property type="entry name" value="GTP_CycHdrlase_I"/>
</dbReference>
<dbReference type="InterPro" id="IPR018234">
    <property type="entry name" value="GTP_CycHdrlase_I_CS"/>
</dbReference>
<dbReference type="InterPro" id="IPR020602">
    <property type="entry name" value="GTP_CycHdrlase_I_dom"/>
</dbReference>
<dbReference type="NCBIfam" id="TIGR00063">
    <property type="entry name" value="folE"/>
    <property type="match status" value="1"/>
</dbReference>
<dbReference type="NCBIfam" id="NF006825">
    <property type="entry name" value="PRK09347.1-2"/>
    <property type="match status" value="1"/>
</dbReference>
<dbReference type="NCBIfam" id="NF006826">
    <property type="entry name" value="PRK09347.1-3"/>
    <property type="match status" value="1"/>
</dbReference>
<dbReference type="PANTHER" id="PTHR11109:SF7">
    <property type="entry name" value="GTP CYCLOHYDROLASE 1"/>
    <property type="match status" value="1"/>
</dbReference>
<dbReference type="PANTHER" id="PTHR11109">
    <property type="entry name" value="GTP CYCLOHYDROLASE I"/>
    <property type="match status" value="1"/>
</dbReference>
<dbReference type="Pfam" id="PF01227">
    <property type="entry name" value="GTP_cyclohydroI"/>
    <property type="match status" value="1"/>
</dbReference>
<dbReference type="SUPFAM" id="SSF55620">
    <property type="entry name" value="Tetrahydrobiopterin biosynthesis enzymes-like"/>
    <property type="match status" value="1"/>
</dbReference>
<dbReference type="PROSITE" id="PS00859">
    <property type="entry name" value="GTP_CYCLOHYDROL_1_1"/>
    <property type="match status" value="1"/>
</dbReference>
<dbReference type="PROSITE" id="PS00860">
    <property type="entry name" value="GTP_CYCLOHYDROL_1_2"/>
    <property type="match status" value="1"/>
</dbReference>
<organism>
    <name type="scientific">Clostridium perfringens (strain 13 / Type A)</name>
    <dbReference type="NCBI Taxonomy" id="195102"/>
    <lineage>
        <taxon>Bacteria</taxon>
        <taxon>Bacillati</taxon>
        <taxon>Bacillota</taxon>
        <taxon>Clostridia</taxon>
        <taxon>Eubacteriales</taxon>
        <taxon>Clostridiaceae</taxon>
        <taxon>Clostridium</taxon>
    </lineage>
</organism>
<name>GCH1_CLOPE</name>
<reference key="1">
    <citation type="journal article" date="2002" name="Proc. Natl. Acad. Sci. U.S.A.">
        <title>Complete genome sequence of Clostridium perfringens, an anaerobic flesh-eater.</title>
        <authorList>
            <person name="Shimizu T."/>
            <person name="Ohtani K."/>
            <person name="Hirakawa H."/>
            <person name="Ohshima K."/>
            <person name="Yamashita A."/>
            <person name="Shiba T."/>
            <person name="Ogasawara N."/>
            <person name="Hattori M."/>
            <person name="Kuhara S."/>
            <person name="Hayashi H."/>
        </authorList>
    </citation>
    <scope>NUCLEOTIDE SEQUENCE [LARGE SCALE GENOMIC DNA]</scope>
    <source>
        <strain>13 / Type A</strain>
    </source>
</reference>
<keyword id="KW-0342">GTP-binding</keyword>
<keyword id="KW-0378">Hydrolase</keyword>
<keyword id="KW-0479">Metal-binding</keyword>
<keyword id="KW-0547">Nucleotide-binding</keyword>
<keyword id="KW-0554">One-carbon metabolism</keyword>
<keyword id="KW-1185">Reference proteome</keyword>
<keyword id="KW-0862">Zinc</keyword>
<feature type="chain" id="PRO_0000119399" description="GTP cyclohydrolase 1">
    <location>
        <begin position="1"/>
        <end position="185"/>
    </location>
</feature>
<feature type="binding site" evidence="2">
    <location>
        <position position="76"/>
    </location>
    <ligand>
        <name>Zn(2+)</name>
        <dbReference type="ChEBI" id="CHEBI:29105"/>
    </ligand>
</feature>
<feature type="binding site" evidence="2">
    <location>
        <position position="79"/>
    </location>
    <ligand>
        <name>Zn(2+)</name>
        <dbReference type="ChEBI" id="CHEBI:29105"/>
    </ligand>
</feature>
<feature type="binding site" evidence="2">
    <location>
        <position position="147"/>
    </location>
    <ligand>
        <name>Zn(2+)</name>
        <dbReference type="ChEBI" id="CHEBI:29105"/>
    </ligand>
</feature>
<comment type="catalytic activity">
    <reaction evidence="2">
        <text>GTP + H2O = 7,8-dihydroneopterin 3'-triphosphate + formate + H(+)</text>
        <dbReference type="Rhea" id="RHEA:17473"/>
        <dbReference type="ChEBI" id="CHEBI:15377"/>
        <dbReference type="ChEBI" id="CHEBI:15378"/>
        <dbReference type="ChEBI" id="CHEBI:15740"/>
        <dbReference type="ChEBI" id="CHEBI:37565"/>
        <dbReference type="ChEBI" id="CHEBI:58462"/>
        <dbReference type="EC" id="3.5.4.16"/>
    </reaction>
</comment>
<comment type="pathway">
    <text evidence="2">Cofactor biosynthesis; 7,8-dihydroneopterin triphosphate biosynthesis; 7,8-dihydroneopterin triphosphate from GTP: step 1/1.</text>
</comment>
<comment type="subunit">
    <text evidence="1">Toroid-shaped homodecamer, composed of two pentamers of five dimers.</text>
</comment>
<comment type="similarity">
    <text evidence="2">Belongs to the GTP cyclohydrolase I family.</text>
</comment>
<evidence type="ECO:0000250" key="1"/>
<evidence type="ECO:0000255" key="2">
    <source>
        <dbReference type="HAMAP-Rule" id="MF_00223"/>
    </source>
</evidence>